<gene>
    <name type="ordered locus">Sden_1630</name>
</gene>
<reference key="1">
    <citation type="submission" date="2006-03" db="EMBL/GenBank/DDBJ databases">
        <title>Complete sequence of Shewanella denitrificans OS217.</title>
        <authorList>
            <consortium name="US DOE Joint Genome Institute"/>
            <person name="Copeland A."/>
            <person name="Lucas S."/>
            <person name="Lapidus A."/>
            <person name="Barry K."/>
            <person name="Detter J.C."/>
            <person name="Glavina del Rio T."/>
            <person name="Hammon N."/>
            <person name="Israni S."/>
            <person name="Dalin E."/>
            <person name="Tice H."/>
            <person name="Pitluck S."/>
            <person name="Brettin T."/>
            <person name="Bruce D."/>
            <person name="Han C."/>
            <person name="Tapia R."/>
            <person name="Gilna P."/>
            <person name="Kiss H."/>
            <person name="Schmutz J."/>
            <person name="Larimer F."/>
            <person name="Land M."/>
            <person name="Hauser L."/>
            <person name="Kyrpides N."/>
            <person name="Lykidis A."/>
            <person name="Richardson P."/>
        </authorList>
    </citation>
    <scope>NUCLEOTIDE SEQUENCE [LARGE SCALE GENOMIC DNA]</scope>
    <source>
        <strain>OS217 / ATCC BAA-1090 / DSM 15013</strain>
    </source>
</reference>
<protein>
    <recommendedName>
        <fullName evidence="1">YcgL domain-containing protein Sden_1630</fullName>
    </recommendedName>
</protein>
<name>Y1630_SHEDO</name>
<evidence type="ECO:0000255" key="1">
    <source>
        <dbReference type="HAMAP-Rule" id="MF_01866"/>
    </source>
</evidence>
<sequence>MICTVYKSRRKLDTYLFVEKRDDFSSVPEALMTMFGPPQLVMLVPLSKRTSLAMADIEKVRSELKDKGYYLQLPPPKANLLEEHKLSLGIDKYAP</sequence>
<proteinExistence type="inferred from homology"/>
<organism>
    <name type="scientific">Shewanella denitrificans (strain OS217 / ATCC BAA-1090 / DSM 15013)</name>
    <dbReference type="NCBI Taxonomy" id="318161"/>
    <lineage>
        <taxon>Bacteria</taxon>
        <taxon>Pseudomonadati</taxon>
        <taxon>Pseudomonadota</taxon>
        <taxon>Gammaproteobacteria</taxon>
        <taxon>Alteromonadales</taxon>
        <taxon>Shewanellaceae</taxon>
        <taxon>Shewanella</taxon>
    </lineage>
</organism>
<keyword id="KW-1185">Reference proteome</keyword>
<accession>Q12NR2</accession>
<dbReference type="EMBL" id="CP000302">
    <property type="protein sequence ID" value="ABE54914.1"/>
    <property type="molecule type" value="Genomic_DNA"/>
</dbReference>
<dbReference type="RefSeq" id="WP_011496072.1">
    <property type="nucleotide sequence ID" value="NC_007954.1"/>
</dbReference>
<dbReference type="SMR" id="Q12NR2"/>
<dbReference type="STRING" id="318161.Sden_1630"/>
<dbReference type="KEGG" id="sdn:Sden_1630"/>
<dbReference type="eggNOG" id="COG3100">
    <property type="taxonomic scope" value="Bacteria"/>
</dbReference>
<dbReference type="HOGENOM" id="CLU_155118_1_0_6"/>
<dbReference type="OrthoDB" id="7062382at2"/>
<dbReference type="Proteomes" id="UP000001982">
    <property type="component" value="Chromosome"/>
</dbReference>
<dbReference type="Gene3D" id="3.10.510.20">
    <property type="entry name" value="YcgL domain"/>
    <property type="match status" value="1"/>
</dbReference>
<dbReference type="HAMAP" id="MF_01866">
    <property type="entry name" value="UPF0745"/>
    <property type="match status" value="1"/>
</dbReference>
<dbReference type="InterPro" id="IPR038068">
    <property type="entry name" value="YcgL-like_sf"/>
</dbReference>
<dbReference type="InterPro" id="IPR027354">
    <property type="entry name" value="YcgL_dom"/>
</dbReference>
<dbReference type="PANTHER" id="PTHR38109">
    <property type="entry name" value="PROTEIN YCGL"/>
    <property type="match status" value="1"/>
</dbReference>
<dbReference type="PANTHER" id="PTHR38109:SF1">
    <property type="entry name" value="PROTEIN YCGL"/>
    <property type="match status" value="1"/>
</dbReference>
<dbReference type="Pfam" id="PF05166">
    <property type="entry name" value="YcgL"/>
    <property type="match status" value="1"/>
</dbReference>
<dbReference type="SUPFAM" id="SSF160191">
    <property type="entry name" value="YcgL-like"/>
    <property type="match status" value="1"/>
</dbReference>
<dbReference type="PROSITE" id="PS51648">
    <property type="entry name" value="YCGL"/>
    <property type="match status" value="1"/>
</dbReference>
<feature type="chain" id="PRO_0000375368" description="YcgL domain-containing protein Sden_1630">
    <location>
        <begin position="1"/>
        <end position="95"/>
    </location>
</feature>
<feature type="domain" description="YcgL" evidence="1">
    <location>
        <begin position="1"/>
        <end position="85"/>
    </location>
</feature>